<accession>Q8A293</accession>
<name>RNH2_BACTN</name>
<proteinExistence type="inferred from homology"/>
<protein>
    <recommendedName>
        <fullName evidence="1">Ribonuclease HII</fullName>
        <shortName evidence="1">RNase HII</shortName>
        <ecNumber evidence="1">3.1.26.4</ecNumber>
    </recommendedName>
</protein>
<reference key="1">
    <citation type="journal article" date="2003" name="Science">
        <title>A genomic view of the human-Bacteroides thetaiotaomicron symbiosis.</title>
        <authorList>
            <person name="Xu J."/>
            <person name="Bjursell M.K."/>
            <person name="Himrod J."/>
            <person name="Deng S."/>
            <person name="Carmichael L.K."/>
            <person name="Chiang H.C."/>
            <person name="Hooper L.V."/>
            <person name="Gordon J.I."/>
        </authorList>
    </citation>
    <scope>NUCLEOTIDE SEQUENCE [LARGE SCALE GENOMIC DNA]</scope>
    <source>
        <strain>ATCC 29148 / DSM 2079 / JCM 5827 / CCUG 10774 / NCTC 10582 / VPI-5482 / E50</strain>
    </source>
</reference>
<gene>
    <name evidence="1" type="primary">rnhB</name>
    <name type="ordered locus">BT_3412</name>
</gene>
<comment type="function">
    <text evidence="1">Endonuclease that specifically degrades the RNA of RNA-DNA hybrids.</text>
</comment>
<comment type="catalytic activity">
    <reaction evidence="1">
        <text>Endonucleolytic cleavage to 5'-phosphomonoester.</text>
        <dbReference type="EC" id="3.1.26.4"/>
    </reaction>
</comment>
<comment type="cofactor">
    <cofactor evidence="1">
        <name>Mn(2+)</name>
        <dbReference type="ChEBI" id="CHEBI:29035"/>
    </cofactor>
    <cofactor evidence="1">
        <name>Mg(2+)</name>
        <dbReference type="ChEBI" id="CHEBI:18420"/>
    </cofactor>
    <text evidence="1">Manganese or magnesium. Binds 1 divalent metal ion per monomer in the absence of substrate. May bind a second metal ion after substrate binding.</text>
</comment>
<comment type="subcellular location">
    <subcellularLocation>
        <location evidence="1">Cytoplasm</location>
    </subcellularLocation>
</comment>
<comment type="similarity">
    <text evidence="1">Belongs to the RNase HII family.</text>
</comment>
<sequence>MLLPYLNKDLIEAGCDEAGRGCLAGSVYAAAVILPKDFKNELLNDSKQLTEKQRYALREVIEKEALAWAVGVVSPEEIDEINILRASFLAMHRAVDQLSVRPQHLLIDGNRFNKYPDIPHTTVIKGDGKYLSIAAASILAKTYRDDYMNRLHEEYPFYDWNKNKGYPTKKHRAAIAEHGTTPYHRMTFNLLGDGQLNLNF</sequence>
<evidence type="ECO:0000255" key="1">
    <source>
        <dbReference type="HAMAP-Rule" id="MF_00052"/>
    </source>
</evidence>
<evidence type="ECO:0000255" key="2">
    <source>
        <dbReference type="PROSITE-ProRule" id="PRU01319"/>
    </source>
</evidence>
<feature type="chain" id="PRO_0000111543" description="Ribonuclease HII">
    <location>
        <begin position="1"/>
        <end position="200"/>
    </location>
</feature>
<feature type="domain" description="RNase H type-2" evidence="2">
    <location>
        <begin position="10"/>
        <end position="200"/>
    </location>
</feature>
<feature type="binding site" evidence="1">
    <location>
        <position position="16"/>
    </location>
    <ligand>
        <name>a divalent metal cation</name>
        <dbReference type="ChEBI" id="CHEBI:60240"/>
    </ligand>
</feature>
<feature type="binding site" evidence="1">
    <location>
        <position position="17"/>
    </location>
    <ligand>
        <name>a divalent metal cation</name>
        <dbReference type="ChEBI" id="CHEBI:60240"/>
    </ligand>
</feature>
<feature type="binding site" evidence="1">
    <location>
        <position position="108"/>
    </location>
    <ligand>
        <name>a divalent metal cation</name>
        <dbReference type="ChEBI" id="CHEBI:60240"/>
    </ligand>
</feature>
<dbReference type="EC" id="3.1.26.4" evidence="1"/>
<dbReference type="EMBL" id="AE015928">
    <property type="protein sequence ID" value="AAO78518.1"/>
    <property type="molecule type" value="Genomic_DNA"/>
</dbReference>
<dbReference type="RefSeq" id="NP_812324.1">
    <property type="nucleotide sequence ID" value="NC_004663.1"/>
</dbReference>
<dbReference type="RefSeq" id="WP_008763678.1">
    <property type="nucleotide sequence ID" value="NC_004663.1"/>
</dbReference>
<dbReference type="SMR" id="Q8A293"/>
<dbReference type="FunCoup" id="Q8A293">
    <property type="interactions" value="318"/>
</dbReference>
<dbReference type="STRING" id="226186.BT_3412"/>
<dbReference type="PaxDb" id="226186-BT_3412"/>
<dbReference type="EnsemblBacteria" id="AAO78518">
    <property type="protein sequence ID" value="AAO78518"/>
    <property type="gene ID" value="BT_3412"/>
</dbReference>
<dbReference type="GeneID" id="60924592"/>
<dbReference type="KEGG" id="bth:BT_3412"/>
<dbReference type="PATRIC" id="fig|226186.12.peg.3481"/>
<dbReference type="eggNOG" id="COG0164">
    <property type="taxonomic scope" value="Bacteria"/>
</dbReference>
<dbReference type="HOGENOM" id="CLU_036532_3_1_10"/>
<dbReference type="InParanoid" id="Q8A293"/>
<dbReference type="OrthoDB" id="9803420at2"/>
<dbReference type="Proteomes" id="UP000001414">
    <property type="component" value="Chromosome"/>
</dbReference>
<dbReference type="GO" id="GO:0005737">
    <property type="term" value="C:cytoplasm"/>
    <property type="evidence" value="ECO:0007669"/>
    <property type="project" value="UniProtKB-SubCell"/>
</dbReference>
<dbReference type="GO" id="GO:0032299">
    <property type="term" value="C:ribonuclease H2 complex"/>
    <property type="evidence" value="ECO:0000318"/>
    <property type="project" value="GO_Central"/>
</dbReference>
<dbReference type="GO" id="GO:0030145">
    <property type="term" value="F:manganese ion binding"/>
    <property type="evidence" value="ECO:0007669"/>
    <property type="project" value="UniProtKB-UniRule"/>
</dbReference>
<dbReference type="GO" id="GO:0003723">
    <property type="term" value="F:RNA binding"/>
    <property type="evidence" value="ECO:0007669"/>
    <property type="project" value="InterPro"/>
</dbReference>
<dbReference type="GO" id="GO:0004523">
    <property type="term" value="F:RNA-DNA hybrid ribonuclease activity"/>
    <property type="evidence" value="ECO:0000318"/>
    <property type="project" value="GO_Central"/>
</dbReference>
<dbReference type="GO" id="GO:0043137">
    <property type="term" value="P:DNA replication, removal of RNA primer"/>
    <property type="evidence" value="ECO:0000318"/>
    <property type="project" value="GO_Central"/>
</dbReference>
<dbReference type="GO" id="GO:0006298">
    <property type="term" value="P:mismatch repair"/>
    <property type="evidence" value="ECO:0000318"/>
    <property type="project" value="GO_Central"/>
</dbReference>
<dbReference type="CDD" id="cd07182">
    <property type="entry name" value="RNase_HII_bacteria_HII_like"/>
    <property type="match status" value="1"/>
</dbReference>
<dbReference type="FunFam" id="3.30.420.10:FF:000078">
    <property type="entry name" value="Ribonuclease HII"/>
    <property type="match status" value="1"/>
</dbReference>
<dbReference type="Gene3D" id="3.30.420.10">
    <property type="entry name" value="Ribonuclease H-like superfamily/Ribonuclease H"/>
    <property type="match status" value="1"/>
</dbReference>
<dbReference type="HAMAP" id="MF_00052_B">
    <property type="entry name" value="RNase_HII_B"/>
    <property type="match status" value="1"/>
</dbReference>
<dbReference type="InterPro" id="IPR022898">
    <property type="entry name" value="RNase_HII"/>
</dbReference>
<dbReference type="InterPro" id="IPR001352">
    <property type="entry name" value="RNase_HII/HIII"/>
</dbReference>
<dbReference type="InterPro" id="IPR024567">
    <property type="entry name" value="RNase_HII/HIII_dom"/>
</dbReference>
<dbReference type="InterPro" id="IPR012337">
    <property type="entry name" value="RNaseH-like_sf"/>
</dbReference>
<dbReference type="InterPro" id="IPR036397">
    <property type="entry name" value="RNaseH_sf"/>
</dbReference>
<dbReference type="NCBIfam" id="NF000595">
    <property type="entry name" value="PRK00015.1-3"/>
    <property type="match status" value="1"/>
</dbReference>
<dbReference type="PANTHER" id="PTHR10954">
    <property type="entry name" value="RIBONUCLEASE H2 SUBUNIT A"/>
    <property type="match status" value="1"/>
</dbReference>
<dbReference type="PANTHER" id="PTHR10954:SF18">
    <property type="entry name" value="RIBONUCLEASE HII"/>
    <property type="match status" value="1"/>
</dbReference>
<dbReference type="Pfam" id="PF01351">
    <property type="entry name" value="RNase_HII"/>
    <property type="match status" value="1"/>
</dbReference>
<dbReference type="SUPFAM" id="SSF53098">
    <property type="entry name" value="Ribonuclease H-like"/>
    <property type="match status" value="1"/>
</dbReference>
<dbReference type="PROSITE" id="PS51975">
    <property type="entry name" value="RNASE_H_2"/>
    <property type="match status" value="1"/>
</dbReference>
<keyword id="KW-0963">Cytoplasm</keyword>
<keyword id="KW-0255">Endonuclease</keyword>
<keyword id="KW-0378">Hydrolase</keyword>
<keyword id="KW-0464">Manganese</keyword>
<keyword id="KW-0479">Metal-binding</keyword>
<keyword id="KW-0540">Nuclease</keyword>
<keyword id="KW-1185">Reference proteome</keyword>
<organism>
    <name type="scientific">Bacteroides thetaiotaomicron (strain ATCC 29148 / DSM 2079 / JCM 5827 / CCUG 10774 / NCTC 10582 / VPI-5482 / E50)</name>
    <dbReference type="NCBI Taxonomy" id="226186"/>
    <lineage>
        <taxon>Bacteria</taxon>
        <taxon>Pseudomonadati</taxon>
        <taxon>Bacteroidota</taxon>
        <taxon>Bacteroidia</taxon>
        <taxon>Bacteroidales</taxon>
        <taxon>Bacteroidaceae</taxon>
        <taxon>Bacteroides</taxon>
    </lineage>
</organism>